<gene>
    <name type="ordered locus">PG_1095</name>
</gene>
<keyword id="KW-0004">4Fe-4S</keyword>
<keyword id="KW-0408">Iron</keyword>
<keyword id="KW-0411">Iron-sulfur</keyword>
<keyword id="KW-0479">Metal-binding</keyword>
<keyword id="KW-0489">Methyltransferase</keyword>
<keyword id="KW-1185">Reference proteome</keyword>
<keyword id="KW-0949">S-adenosyl-L-methionine</keyword>
<keyword id="KW-0808">Transferase</keyword>
<feature type="chain" id="PRO_0000162009" description="Uncharacterized RNA methyltransferase PG_1095">
    <location>
        <begin position="1"/>
        <end position="465"/>
    </location>
</feature>
<feature type="domain" description="TRAM" evidence="2">
    <location>
        <begin position="1"/>
        <end position="50"/>
    </location>
</feature>
<feature type="active site" description="Nucleophile" evidence="3">
    <location>
        <position position="419"/>
    </location>
</feature>
<feature type="binding site" evidence="1">
    <location>
        <position position="63"/>
    </location>
    <ligand>
        <name>[4Fe-4S] cluster</name>
        <dbReference type="ChEBI" id="CHEBI:49883"/>
    </ligand>
</feature>
<feature type="binding site" evidence="1">
    <location>
        <position position="69"/>
    </location>
    <ligand>
        <name>[4Fe-4S] cluster</name>
        <dbReference type="ChEBI" id="CHEBI:49883"/>
    </ligand>
</feature>
<feature type="binding site" evidence="1">
    <location>
        <position position="72"/>
    </location>
    <ligand>
        <name>[4Fe-4S] cluster</name>
        <dbReference type="ChEBI" id="CHEBI:49883"/>
    </ligand>
</feature>
<feature type="binding site" evidence="1">
    <location>
        <position position="168"/>
    </location>
    <ligand>
        <name>[4Fe-4S] cluster</name>
        <dbReference type="ChEBI" id="CHEBI:49883"/>
    </ligand>
</feature>
<feature type="binding site" evidence="3">
    <location>
        <position position="293"/>
    </location>
    <ligand>
        <name>S-adenosyl-L-methionine</name>
        <dbReference type="ChEBI" id="CHEBI:59789"/>
    </ligand>
</feature>
<feature type="binding site" evidence="3">
    <location>
        <position position="322"/>
    </location>
    <ligand>
        <name>S-adenosyl-L-methionine</name>
        <dbReference type="ChEBI" id="CHEBI:59789"/>
    </ligand>
</feature>
<feature type="binding site" evidence="3">
    <location>
        <position position="343"/>
    </location>
    <ligand>
        <name>S-adenosyl-L-methionine</name>
        <dbReference type="ChEBI" id="CHEBI:59789"/>
    </ligand>
</feature>
<feature type="binding site" evidence="3">
    <location>
        <position position="392"/>
    </location>
    <ligand>
        <name>S-adenosyl-L-methionine</name>
        <dbReference type="ChEBI" id="CHEBI:59789"/>
    </ligand>
</feature>
<dbReference type="EC" id="2.1.1.-"/>
<dbReference type="EMBL" id="AE015924">
    <property type="protein sequence ID" value="AAQ66206.1"/>
    <property type="molecule type" value="Genomic_DNA"/>
</dbReference>
<dbReference type="SMR" id="Q7MVG9"/>
<dbReference type="STRING" id="242619.PG_1095"/>
<dbReference type="EnsemblBacteria" id="AAQ66206">
    <property type="protein sequence ID" value="AAQ66206"/>
    <property type="gene ID" value="PG_1095"/>
</dbReference>
<dbReference type="KEGG" id="pgi:PG_1095"/>
<dbReference type="eggNOG" id="COG2265">
    <property type="taxonomic scope" value="Bacteria"/>
</dbReference>
<dbReference type="HOGENOM" id="CLU_014689_7_2_10"/>
<dbReference type="Proteomes" id="UP000000588">
    <property type="component" value="Chromosome"/>
</dbReference>
<dbReference type="GO" id="GO:0051539">
    <property type="term" value="F:4 iron, 4 sulfur cluster binding"/>
    <property type="evidence" value="ECO:0007669"/>
    <property type="project" value="UniProtKB-KW"/>
</dbReference>
<dbReference type="GO" id="GO:0046872">
    <property type="term" value="F:metal ion binding"/>
    <property type="evidence" value="ECO:0007669"/>
    <property type="project" value="UniProtKB-KW"/>
</dbReference>
<dbReference type="GO" id="GO:0070041">
    <property type="term" value="F:rRNA (uridine-C5-)-methyltransferase activity"/>
    <property type="evidence" value="ECO:0007669"/>
    <property type="project" value="TreeGrafter"/>
</dbReference>
<dbReference type="GO" id="GO:0070475">
    <property type="term" value="P:rRNA base methylation"/>
    <property type="evidence" value="ECO:0007669"/>
    <property type="project" value="TreeGrafter"/>
</dbReference>
<dbReference type="CDD" id="cd02440">
    <property type="entry name" value="AdoMet_MTases"/>
    <property type="match status" value="1"/>
</dbReference>
<dbReference type="FunFam" id="3.40.50.150:FF:000009">
    <property type="entry name" value="23S rRNA (Uracil(1939)-C(5))-methyltransferase RlmD"/>
    <property type="match status" value="1"/>
</dbReference>
<dbReference type="Gene3D" id="2.40.50.1070">
    <property type="match status" value="1"/>
</dbReference>
<dbReference type="Gene3D" id="2.40.50.140">
    <property type="entry name" value="Nucleic acid-binding proteins"/>
    <property type="match status" value="1"/>
</dbReference>
<dbReference type="Gene3D" id="3.40.50.150">
    <property type="entry name" value="Vaccinia Virus protein VP39"/>
    <property type="match status" value="1"/>
</dbReference>
<dbReference type="InterPro" id="IPR030390">
    <property type="entry name" value="MeTrfase_TrmA_AS"/>
</dbReference>
<dbReference type="InterPro" id="IPR030391">
    <property type="entry name" value="MeTrfase_TrmA_CS"/>
</dbReference>
<dbReference type="InterPro" id="IPR012340">
    <property type="entry name" value="NA-bd_OB-fold"/>
</dbReference>
<dbReference type="InterPro" id="IPR029063">
    <property type="entry name" value="SAM-dependent_MTases_sf"/>
</dbReference>
<dbReference type="InterPro" id="IPR002792">
    <property type="entry name" value="TRAM_dom"/>
</dbReference>
<dbReference type="InterPro" id="IPR010280">
    <property type="entry name" value="U5_MeTrfase_fam"/>
</dbReference>
<dbReference type="NCBIfam" id="TIGR00479">
    <property type="entry name" value="rumA"/>
    <property type="match status" value="1"/>
</dbReference>
<dbReference type="PANTHER" id="PTHR11061">
    <property type="entry name" value="RNA M5U METHYLTRANSFERASE"/>
    <property type="match status" value="1"/>
</dbReference>
<dbReference type="PANTHER" id="PTHR11061:SF30">
    <property type="entry name" value="TRNA (URACIL(54)-C(5))-METHYLTRANSFERASE"/>
    <property type="match status" value="1"/>
</dbReference>
<dbReference type="Pfam" id="PF01938">
    <property type="entry name" value="TRAM"/>
    <property type="match status" value="1"/>
</dbReference>
<dbReference type="Pfam" id="PF05958">
    <property type="entry name" value="tRNA_U5-meth_tr"/>
    <property type="match status" value="1"/>
</dbReference>
<dbReference type="SUPFAM" id="SSF50249">
    <property type="entry name" value="Nucleic acid-binding proteins"/>
    <property type="match status" value="1"/>
</dbReference>
<dbReference type="SUPFAM" id="SSF53335">
    <property type="entry name" value="S-adenosyl-L-methionine-dependent methyltransferases"/>
    <property type="match status" value="1"/>
</dbReference>
<dbReference type="PROSITE" id="PS51687">
    <property type="entry name" value="SAM_MT_RNA_M5U"/>
    <property type="match status" value="1"/>
</dbReference>
<dbReference type="PROSITE" id="PS50926">
    <property type="entry name" value="TRAM"/>
    <property type="match status" value="1"/>
</dbReference>
<dbReference type="PROSITE" id="PS01230">
    <property type="entry name" value="TRMA_1"/>
    <property type="match status" value="1"/>
</dbReference>
<dbReference type="PROSITE" id="PS01231">
    <property type="entry name" value="TRMA_2"/>
    <property type="match status" value="1"/>
</dbReference>
<comment type="similarity">
    <text evidence="3">Belongs to the class I-like SAM-binding methyltransferase superfamily. RNA M5U methyltransferase family.</text>
</comment>
<name>Y1095_PORGI</name>
<organism>
    <name type="scientific">Porphyromonas gingivalis (strain ATCC BAA-308 / W83)</name>
    <dbReference type="NCBI Taxonomy" id="242619"/>
    <lineage>
        <taxon>Bacteria</taxon>
        <taxon>Pseudomonadati</taxon>
        <taxon>Bacteroidota</taxon>
        <taxon>Bacteroidia</taxon>
        <taxon>Bacteroidales</taxon>
        <taxon>Porphyromonadaceae</taxon>
        <taxon>Porphyromonas</taxon>
    </lineage>
</organism>
<proteinExistence type="inferred from homology"/>
<accession>Q7MVG9</accession>
<reference key="1">
    <citation type="journal article" date="2003" name="J. Bacteriol.">
        <title>Complete genome sequence of the oral pathogenic bacterium Porphyromonas gingivalis strain W83.</title>
        <authorList>
            <person name="Nelson K.E."/>
            <person name="Fleischmann R.D."/>
            <person name="DeBoy R.T."/>
            <person name="Paulsen I.T."/>
            <person name="Fouts D.E."/>
            <person name="Eisen J.A."/>
            <person name="Daugherty S.C."/>
            <person name="Dodson R.J."/>
            <person name="Durkin A.S."/>
            <person name="Gwinn M.L."/>
            <person name="Haft D.H."/>
            <person name="Kolonay J.F."/>
            <person name="Nelson W.C."/>
            <person name="Mason T.M."/>
            <person name="Tallon L."/>
            <person name="Gray J."/>
            <person name="Granger D."/>
            <person name="Tettelin H."/>
            <person name="Dong H."/>
            <person name="Galvin J.L."/>
            <person name="Duncan M.J."/>
            <person name="Dewhirst F.E."/>
            <person name="Fraser C.M."/>
        </authorList>
    </citation>
    <scope>NUCLEOTIDE SEQUENCE [LARGE SCALE GENOMIC DNA]</scope>
    <source>
        <strain>ATCC BAA-308 / W83</strain>
    </source>
</reference>
<sequence>MEITDLAAEGNALCRIDDMVMFVPFAAPGDRCTVQVVKKKRNFMQGRIVSIESPSPIRKGPFCTHFTVCGGCKWQHIPYEIQLRAKEQQVTDALVRLGKVEVEEMQPILGSEQTEYYRNKLEFTFSNKRWLLPEEVQEVDGDFSPEVRYGLGFHIPGMFDKVLDIRECHLGAKVSDEIRLFIREYCMQDPERYPFFDLRNQEGLMRTLMIRTTSTGELMVVVVFFRDDVAAREALLAAVAERFPQITSLLYVINTKCNDTIGDQEVLLYHGREYIEEEMEGLKFKIGAKSFYQTNSRQAYQLYRIAREFAGLTGDELVYDLYTGTGTIANFVAGQAHRVIGIEYVPEAIEDARTNSLLNGIENTLFYAGDMKDILTNDFIEQHGRPDVVITDPPRAGMHESVIDAILFAAPRRIVYVSCNPATQARDLALLMADGRYRAVKSRPVDMFPHTHHVENVVLLVRNTE</sequence>
<protein>
    <recommendedName>
        <fullName>Uncharacterized RNA methyltransferase PG_1095</fullName>
        <ecNumber>2.1.1.-</ecNumber>
    </recommendedName>
</protein>
<evidence type="ECO:0000250" key="1"/>
<evidence type="ECO:0000255" key="2">
    <source>
        <dbReference type="PROSITE-ProRule" id="PRU00208"/>
    </source>
</evidence>
<evidence type="ECO:0000255" key="3">
    <source>
        <dbReference type="PROSITE-ProRule" id="PRU01024"/>
    </source>
</evidence>